<reference key="1">
    <citation type="submission" date="2004-08" db="EMBL/GenBank/DDBJ databases">
        <authorList>
            <consortium name="NIH - Zebrafish Gene Collection (ZGC) project"/>
        </authorList>
    </citation>
    <scope>NUCLEOTIDE SEQUENCE [LARGE SCALE MRNA]</scope>
    <source>
        <tissue>Embryo</tissue>
    </source>
</reference>
<reference key="2">
    <citation type="journal article" date="2013" name="Nature">
        <title>The zebrafish reference genome sequence and its relationship to the human genome.</title>
        <authorList>
            <person name="Howe K."/>
            <person name="Clark M.D."/>
            <person name="Torroja C.F."/>
            <person name="Torrance J."/>
            <person name="Berthelot C."/>
            <person name="Muffato M."/>
            <person name="Collins J.E."/>
            <person name="Humphray S."/>
            <person name="McLaren K."/>
            <person name="Matthews L."/>
            <person name="McLaren S."/>
            <person name="Sealy I."/>
            <person name="Caccamo M."/>
            <person name="Churcher C."/>
            <person name="Scott C."/>
            <person name="Barrett J.C."/>
            <person name="Koch R."/>
            <person name="Rauch G.J."/>
            <person name="White S."/>
            <person name="Chow W."/>
            <person name="Kilian B."/>
            <person name="Quintais L.T."/>
            <person name="Guerra-Assuncao J.A."/>
            <person name="Zhou Y."/>
            <person name="Gu Y."/>
            <person name="Yen J."/>
            <person name="Vogel J.H."/>
            <person name="Eyre T."/>
            <person name="Redmond S."/>
            <person name="Banerjee R."/>
            <person name="Chi J."/>
            <person name="Fu B."/>
            <person name="Langley E."/>
            <person name="Maguire S.F."/>
            <person name="Laird G.K."/>
            <person name="Lloyd D."/>
            <person name="Kenyon E."/>
            <person name="Donaldson S."/>
            <person name="Sehra H."/>
            <person name="Almeida-King J."/>
            <person name="Loveland J."/>
            <person name="Trevanion S."/>
            <person name="Jones M."/>
            <person name="Quail M."/>
            <person name="Willey D."/>
            <person name="Hunt A."/>
            <person name="Burton J."/>
            <person name="Sims S."/>
            <person name="McLay K."/>
            <person name="Plumb B."/>
            <person name="Davis J."/>
            <person name="Clee C."/>
            <person name="Oliver K."/>
            <person name="Clark R."/>
            <person name="Riddle C."/>
            <person name="Elliot D."/>
            <person name="Threadgold G."/>
            <person name="Harden G."/>
            <person name="Ware D."/>
            <person name="Begum S."/>
            <person name="Mortimore B."/>
            <person name="Kerry G."/>
            <person name="Heath P."/>
            <person name="Phillimore B."/>
            <person name="Tracey A."/>
            <person name="Corby N."/>
            <person name="Dunn M."/>
            <person name="Johnson C."/>
            <person name="Wood J."/>
            <person name="Clark S."/>
            <person name="Pelan S."/>
            <person name="Griffiths G."/>
            <person name="Smith M."/>
            <person name="Glithero R."/>
            <person name="Howden P."/>
            <person name="Barker N."/>
            <person name="Lloyd C."/>
            <person name="Stevens C."/>
            <person name="Harley J."/>
            <person name="Holt K."/>
            <person name="Panagiotidis G."/>
            <person name="Lovell J."/>
            <person name="Beasley H."/>
            <person name="Henderson C."/>
            <person name="Gordon D."/>
            <person name="Auger K."/>
            <person name="Wright D."/>
            <person name="Collins J."/>
            <person name="Raisen C."/>
            <person name="Dyer L."/>
            <person name="Leung K."/>
            <person name="Robertson L."/>
            <person name="Ambridge K."/>
            <person name="Leongamornlert D."/>
            <person name="McGuire S."/>
            <person name="Gilderthorp R."/>
            <person name="Griffiths C."/>
            <person name="Manthravadi D."/>
            <person name="Nichol S."/>
            <person name="Barker G."/>
            <person name="Whitehead S."/>
            <person name="Kay M."/>
            <person name="Brown J."/>
            <person name="Murnane C."/>
            <person name="Gray E."/>
            <person name="Humphries M."/>
            <person name="Sycamore N."/>
            <person name="Barker D."/>
            <person name="Saunders D."/>
            <person name="Wallis J."/>
            <person name="Babbage A."/>
            <person name="Hammond S."/>
            <person name="Mashreghi-Mohammadi M."/>
            <person name="Barr L."/>
            <person name="Martin S."/>
            <person name="Wray P."/>
            <person name="Ellington A."/>
            <person name="Matthews N."/>
            <person name="Ellwood M."/>
            <person name="Woodmansey R."/>
            <person name="Clark G."/>
            <person name="Cooper J."/>
            <person name="Tromans A."/>
            <person name="Grafham D."/>
            <person name="Skuce C."/>
            <person name="Pandian R."/>
            <person name="Andrews R."/>
            <person name="Harrison E."/>
            <person name="Kimberley A."/>
            <person name="Garnett J."/>
            <person name="Fosker N."/>
            <person name="Hall R."/>
            <person name="Garner P."/>
            <person name="Kelly D."/>
            <person name="Bird C."/>
            <person name="Palmer S."/>
            <person name="Gehring I."/>
            <person name="Berger A."/>
            <person name="Dooley C.M."/>
            <person name="Ersan-Urun Z."/>
            <person name="Eser C."/>
            <person name="Geiger H."/>
            <person name="Geisler M."/>
            <person name="Karotki L."/>
            <person name="Kirn A."/>
            <person name="Konantz J."/>
            <person name="Konantz M."/>
            <person name="Oberlander M."/>
            <person name="Rudolph-Geiger S."/>
            <person name="Teucke M."/>
            <person name="Lanz C."/>
            <person name="Raddatz G."/>
            <person name="Osoegawa K."/>
            <person name="Zhu B."/>
            <person name="Rapp A."/>
            <person name="Widaa S."/>
            <person name="Langford C."/>
            <person name="Yang F."/>
            <person name="Schuster S.C."/>
            <person name="Carter N.P."/>
            <person name="Harrow J."/>
            <person name="Ning Z."/>
            <person name="Herrero J."/>
            <person name="Searle S.M."/>
            <person name="Enright A."/>
            <person name="Geisler R."/>
            <person name="Plasterk R.H."/>
            <person name="Lee C."/>
            <person name="Westerfield M."/>
            <person name="de Jong P.J."/>
            <person name="Zon L.I."/>
            <person name="Postlethwait J.H."/>
            <person name="Nusslein-Volhard C."/>
            <person name="Hubbard T.J."/>
            <person name="Roest Crollius H."/>
            <person name="Rogers J."/>
            <person name="Stemple D.L."/>
        </authorList>
    </citation>
    <scope>NOMENCLATURE</scope>
    <source>
        <strain>Tuebingen</strain>
    </source>
</reference>
<reference key="3">
    <citation type="journal article" date="2015" name="Mol. Cell">
        <title>Higher-order assembly of BRCC36-KIAA0157 is required for DUB activity and biological function.</title>
        <authorList>
            <person name="Zeqiraj E."/>
            <person name="Tian L."/>
            <person name="Piggott C.A."/>
            <person name="Pillon M.C."/>
            <person name="Duffy N.M."/>
            <person name="Ceccarelli D.F."/>
            <person name="Keszei A.F."/>
            <person name="Lorenzen K."/>
            <person name="Kurinov I."/>
            <person name="Orlicky S."/>
            <person name="Gish G.D."/>
            <person name="Heck A.J."/>
            <person name="Guarne A."/>
            <person name="Greenberg R.A."/>
            <person name="Sicheri F."/>
        </authorList>
    </citation>
    <scope>FUNCTION</scope>
    <scope>IDENTIFICATION IN THE BRISC COMPLEX</scope>
</reference>
<gene>
    <name type="primary">babam1</name>
    <name type="synonym">merit40</name>
    <name type="synonym">nba1</name>
    <name type="ORF">Zgc:100909</name>
</gene>
<sequence>METTEPGQADGEERMMDLRPRTRSNPEGAEDRRSSTGSLNSSLPSAPQPAVGSRVEGEGEAASSDSPPVSATAIAATASVPVAAVGNTTTTNTASLPAMSPAVKERPKPSQPTMPTQIPPSAELHLRAPRVNCPEKVIICLDLSEEMSLQKLESINGSKTNALNISQKMIEMFVRTKHKIDKRHEFALVVVNDDAMWLSGFTSDPRELCSCLYDLETNVCESFNLEDLFNVILQKIELPQMENIQTIPPPFVVRTLLVFSRHAGMLQFNPSDAVKKMLQSPYFFFDVVFLHNGTEEQTEDTSWKDVYASFCELDTKGMCYRFEVSLCGPAIELHNCMAKLLCHPLQRPFQSHASYSLLEDEDTLENEATV</sequence>
<keyword id="KW-0131">Cell cycle</keyword>
<keyword id="KW-0132">Cell division</keyword>
<keyword id="KW-0156">Chromatin regulator</keyword>
<keyword id="KW-0963">Cytoplasm</keyword>
<keyword id="KW-0227">DNA damage</keyword>
<keyword id="KW-0234">DNA repair</keyword>
<keyword id="KW-0498">Mitosis</keyword>
<keyword id="KW-0539">Nucleus</keyword>
<keyword id="KW-1185">Reference proteome</keyword>
<keyword id="KW-0833">Ubl conjugation pathway</keyword>
<name>BABA1_DANRE</name>
<evidence type="ECO:0000250" key="1">
    <source>
        <dbReference type="UniProtKB" id="Q9NWV8"/>
    </source>
</evidence>
<evidence type="ECO:0000256" key="2">
    <source>
        <dbReference type="SAM" id="MobiDB-lite"/>
    </source>
</evidence>
<evidence type="ECO:0000303" key="3">
    <source>
    </source>
</evidence>
<evidence type="ECO:0000305" key="4"/>
<comment type="function">
    <text evidence="1">Component of the BRCA1-A complex, a complex that specifically recognizes 'Lys-63'-linked ubiquitinated histones H2A and H2AX at DNA lesion sites. The BRCA1-A complex also possesses deubiquitinase activity that specifically removes 'Lys-63'-linked ubiquitin on histones H2A and H2AX. In the BRCA1-A complex, it is required for the complex integrity and its localization at DNA double-strand breaks (DSBs). Component of the BRISC complex, a multiprotein complex that specifically cleaves 'Lys-63'-linked ubiquitin in various substrates (PubMed:26344097). In these 2 complexes, it is probably required to maintain the stability of babam2 and help the 'Lys-63'-linked deubiquitinase activity mediated by brcc3/brcc36 component. The BRISC complex is required for normal mitotic spindle assembly and microtubule attachment to kinetochores via its role in deubiquitinating numa1.</text>
</comment>
<comment type="subunit">
    <text evidence="1">Component of the ARISC complex, at least composed of uimc1/rap80, abraxas1, brcc3/brcc36, babam2 and babam1/nba1. Component of the BRCA1-A complex, at least composed of bard1, uimc1/rap80, abraxas1, brcc3/brcc36, babam2 and babam1/nba1. In the BRCA1-A complex, interacts directly with abraxas1 and babam2. Component of the BRISC complex, at least composed of abraxas2, brcc3/brcc36, babam2 and babam1/nba1 (PubMed:26344097).</text>
</comment>
<comment type="subcellular location">
    <subcellularLocation>
        <location evidence="1">Cytoplasm</location>
    </subcellularLocation>
    <subcellularLocation>
        <location evidence="1">Nucleus</location>
    </subcellularLocation>
    <text evidence="1">Localizes at sites of DNA damage at double-strand breaks (DSBs).</text>
</comment>
<comment type="domain">
    <text evidence="1">The VWFA-like region is similar to the VWFA domain. Its presence reveals similarities between the structure of the 19S proteasome and the BRCA1-A complexes.</text>
</comment>
<comment type="similarity">
    <text evidence="4">Belongs to the BABAM1 family.</text>
</comment>
<comment type="caution">
    <text evidence="3 4">There is no annotated ortholog of the vertebrate gene BRCA1 in the current zebrafish genome (PubMed:23594743). Therefore, mentions of brca1 in relevant curated zebrafish entries have been removed. However some complexes, conserved widely across species, have BRCA1 in their name and so have been left unchanged.</text>
</comment>
<comment type="sequence caution" evidence="4">
    <conflict type="frameshift">
        <sequence resource="EMBL-CDS" id="AAH79500"/>
    </conflict>
</comment>
<accession>Q6AXK4</accession>
<proteinExistence type="evidence at protein level"/>
<protein>
    <recommendedName>
        <fullName>BRISC and BRCA1-A complex member 1</fullName>
    </recommendedName>
    <alternativeName>
        <fullName>Mediator of RAP80 interactions and targeting subunit of 40 kDa</fullName>
    </alternativeName>
    <alternativeName>
        <fullName>New component of the BRCA1-A complex</fullName>
    </alternativeName>
</protein>
<feature type="chain" id="PRO_0000373929" description="BRISC and BRCA1-A complex member 1">
    <location>
        <begin position="1"/>
        <end position="370"/>
    </location>
</feature>
<feature type="region of interest" description="Disordered" evidence="2">
    <location>
        <begin position="1"/>
        <end position="69"/>
    </location>
</feature>
<feature type="region of interest" description="Disordered" evidence="2">
    <location>
        <begin position="90"/>
        <end position="126"/>
    </location>
</feature>
<feature type="region of interest" description="VWFA-like">
    <location>
        <begin position="137"/>
        <end position="340"/>
    </location>
</feature>
<feature type="compositionally biased region" description="Basic and acidic residues" evidence="2">
    <location>
        <begin position="11"/>
        <end position="20"/>
    </location>
</feature>
<feature type="compositionally biased region" description="Low complexity" evidence="2">
    <location>
        <begin position="35"/>
        <end position="45"/>
    </location>
</feature>
<dbReference type="EMBL" id="BC079500">
    <property type="protein sequence ID" value="AAH79500.1"/>
    <property type="status" value="ALT_FRAME"/>
    <property type="molecule type" value="mRNA"/>
</dbReference>
<dbReference type="RefSeq" id="NP_001003752.2">
    <property type="nucleotide sequence ID" value="NM_001003752.2"/>
</dbReference>
<dbReference type="RefSeq" id="XP_017213706.1">
    <property type="nucleotide sequence ID" value="XM_017358217.3"/>
</dbReference>
<dbReference type="SMR" id="Q6AXK4"/>
<dbReference type="FunCoup" id="Q6AXK4">
    <property type="interactions" value="947"/>
</dbReference>
<dbReference type="STRING" id="7955.ENSDARP00000108272"/>
<dbReference type="PaxDb" id="7955-ENSDARP00000015195"/>
<dbReference type="Ensembl" id="ENSDART00000008980">
    <property type="protein sequence ID" value="ENSDARP00000015195"/>
    <property type="gene ID" value="ENSDARG00000077526"/>
</dbReference>
<dbReference type="Ensembl" id="ENSDART00000122262">
    <property type="protein sequence ID" value="ENSDARP00000108272"/>
    <property type="gene ID" value="ENSDARG00000077526"/>
</dbReference>
<dbReference type="GeneID" id="445296"/>
<dbReference type="KEGG" id="dre:445296"/>
<dbReference type="AGR" id="ZFIN:ZDB-GENE-040808-6"/>
<dbReference type="CTD" id="29086"/>
<dbReference type="ZFIN" id="ZDB-GENE-040808-6">
    <property type="gene designation" value="babam1"/>
</dbReference>
<dbReference type="eggNOG" id="ENOG502QPZP">
    <property type="taxonomic scope" value="Eukaryota"/>
</dbReference>
<dbReference type="InParanoid" id="Q6AXK4"/>
<dbReference type="OMA" id="SCTTAWP"/>
<dbReference type="OrthoDB" id="547311at2759"/>
<dbReference type="PhylomeDB" id="Q6AXK4"/>
<dbReference type="TreeFam" id="TF329070"/>
<dbReference type="PRO" id="PR:Q6AXK4"/>
<dbReference type="Proteomes" id="UP000000437">
    <property type="component" value="Alternate scaffold 11"/>
</dbReference>
<dbReference type="Proteomes" id="UP000000437">
    <property type="component" value="Chromosome 11"/>
</dbReference>
<dbReference type="Bgee" id="ENSDARG00000077526">
    <property type="expression patterns" value="Expressed in testis and 24 other cell types or tissues"/>
</dbReference>
<dbReference type="ExpressionAtlas" id="Q6AXK4">
    <property type="expression patterns" value="baseline and differential"/>
</dbReference>
<dbReference type="GO" id="GO:0070531">
    <property type="term" value="C:BRCA1-A complex"/>
    <property type="evidence" value="ECO:0000250"/>
    <property type="project" value="UniProtKB"/>
</dbReference>
<dbReference type="GO" id="GO:0070552">
    <property type="term" value="C:BRISC complex"/>
    <property type="evidence" value="ECO:0000250"/>
    <property type="project" value="UniProtKB"/>
</dbReference>
<dbReference type="GO" id="GO:0005737">
    <property type="term" value="C:cytoplasm"/>
    <property type="evidence" value="ECO:0000250"/>
    <property type="project" value="UniProtKB"/>
</dbReference>
<dbReference type="GO" id="GO:0016604">
    <property type="term" value="C:nuclear body"/>
    <property type="evidence" value="ECO:0000318"/>
    <property type="project" value="GO_Central"/>
</dbReference>
<dbReference type="GO" id="GO:0005634">
    <property type="term" value="C:nucleus"/>
    <property type="evidence" value="ECO:0000250"/>
    <property type="project" value="UniProtKB"/>
</dbReference>
<dbReference type="GO" id="GO:0051301">
    <property type="term" value="P:cell division"/>
    <property type="evidence" value="ECO:0007669"/>
    <property type="project" value="UniProtKB-KW"/>
</dbReference>
<dbReference type="GO" id="GO:0140861">
    <property type="term" value="P:DNA repair-dependent chromatin remodeling"/>
    <property type="evidence" value="ECO:0000250"/>
    <property type="project" value="UniProtKB"/>
</dbReference>
<dbReference type="GO" id="GO:0006302">
    <property type="term" value="P:double-strand break repair"/>
    <property type="evidence" value="ECO:0000250"/>
    <property type="project" value="UniProtKB"/>
</dbReference>
<dbReference type="GO" id="GO:0007095">
    <property type="term" value="P:mitotic G2 DNA damage checkpoint signaling"/>
    <property type="evidence" value="ECO:0000250"/>
    <property type="project" value="UniProtKB"/>
</dbReference>
<dbReference type="GO" id="GO:0045739">
    <property type="term" value="P:positive regulation of DNA repair"/>
    <property type="evidence" value="ECO:0000250"/>
    <property type="project" value="UniProtKB"/>
</dbReference>
<dbReference type="GO" id="GO:0010212">
    <property type="term" value="P:response to ionizing radiation"/>
    <property type="evidence" value="ECO:0000250"/>
    <property type="project" value="UniProtKB"/>
</dbReference>
<dbReference type="CDD" id="cd21502">
    <property type="entry name" value="vWA_BABAM1"/>
    <property type="match status" value="1"/>
</dbReference>
<dbReference type="InterPro" id="IPR026126">
    <property type="entry name" value="BABAM1"/>
</dbReference>
<dbReference type="InterPro" id="IPR036465">
    <property type="entry name" value="vWFA_dom_sf"/>
</dbReference>
<dbReference type="PANTHER" id="PTHR15660">
    <property type="entry name" value="BRISC AND BRCA1-A COMPLEX MEMBER 1"/>
    <property type="match status" value="1"/>
</dbReference>
<dbReference type="PANTHER" id="PTHR15660:SF1">
    <property type="entry name" value="BRISC AND BRCA1-A COMPLEX MEMBER 1"/>
    <property type="match status" value="1"/>
</dbReference>
<dbReference type="SUPFAM" id="SSF53300">
    <property type="entry name" value="vWA-like"/>
    <property type="match status" value="1"/>
</dbReference>
<organism>
    <name type="scientific">Danio rerio</name>
    <name type="common">Zebrafish</name>
    <name type="synonym">Brachydanio rerio</name>
    <dbReference type="NCBI Taxonomy" id="7955"/>
    <lineage>
        <taxon>Eukaryota</taxon>
        <taxon>Metazoa</taxon>
        <taxon>Chordata</taxon>
        <taxon>Craniata</taxon>
        <taxon>Vertebrata</taxon>
        <taxon>Euteleostomi</taxon>
        <taxon>Actinopterygii</taxon>
        <taxon>Neopterygii</taxon>
        <taxon>Teleostei</taxon>
        <taxon>Ostariophysi</taxon>
        <taxon>Cypriniformes</taxon>
        <taxon>Danionidae</taxon>
        <taxon>Danioninae</taxon>
        <taxon>Danio</taxon>
    </lineage>
</organism>